<protein>
    <recommendedName>
        <fullName evidence="1">Methionyl-tRNA formyltransferase</fullName>
        <ecNumber evidence="1">2.1.2.9</ecNumber>
    </recommendedName>
</protein>
<comment type="function">
    <text evidence="1">Attaches a formyl group to the free amino group of methionyl-tRNA(fMet). The formyl group appears to play a dual role in the initiator identity of N-formylmethionyl-tRNA by promoting its recognition by IF2 and preventing the misappropriation of this tRNA by the elongation apparatus.</text>
</comment>
<comment type="catalytic activity">
    <reaction evidence="1">
        <text>L-methionyl-tRNA(fMet) + (6R)-10-formyltetrahydrofolate = N-formyl-L-methionyl-tRNA(fMet) + (6S)-5,6,7,8-tetrahydrofolate + H(+)</text>
        <dbReference type="Rhea" id="RHEA:24380"/>
        <dbReference type="Rhea" id="RHEA-COMP:9952"/>
        <dbReference type="Rhea" id="RHEA-COMP:9953"/>
        <dbReference type="ChEBI" id="CHEBI:15378"/>
        <dbReference type="ChEBI" id="CHEBI:57453"/>
        <dbReference type="ChEBI" id="CHEBI:78530"/>
        <dbReference type="ChEBI" id="CHEBI:78844"/>
        <dbReference type="ChEBI" id="CHEBI:195366"/>
        <dbReference type="EC" id="2.1.2.9"/>
    </reaction>
</comment>
<comment type="similarity">
    <text evidence="1">Belongs to the Fmt family.</text>
</comment>
<organism>
    <name type="scientific">Streptococcus pyogenes serotype M12 (strain MGAS9429)</name>
    <dbReference type="NCBI Taxonomy" id="370551"/>
    <lineage>
        <taxon>Bacteria</taxon>
        <taxon>Bacillati</taxon>
        <taxon>Bacillota</taxon>
        <taxon>Bacilli</taxon>
        <taxon>Lactobacillales</taxon>
        <taxon>Streptococcaceae</taxon>
        <taxon>Streptococcus</taxon>
    </lineage>
</organism>
<gene>
    <name evidence="1" type="primary">fmt</name>
    <name type="ordered locus">MGAS9429_Spy1333</name>
</gene>
<name>FMT_STRPC</name>
<feature type="chain" id="PRO_1000020178" description="Methionyl-tRNA formyltransferase">
    <location>
        <begin position="1"/>
        <end position="311"/>
    </location>
</feature>
<feature type="binding site" evidence="1">
    <location>
        <begin position="110"/>
        <end position="113"/>
    </location>
    <ligand>
        <name>(6S)-5,6,7,8-tetrahydrofolate</name>
        <dbReference type="ChEBI" id="CHEBI:57453"/>
    </ligand>
</feature>
<reference key="1">
    <citation type="journal article" date="2006" name="Proc. Natl. Acad. Sci. U.S.A.">
        <title>Molecular genetic anatomy of inter- and intraserotype variation in the human bacterial pathogen group A Streptococcus.</title>
        <authorList>
            <person name="Beres S.B."/>
            <person name="Richter E.W."/>
            <person name="Nagiec M.J."/>
            <person name="Sumby P."/>
            <person name="Porcella S.F."/>
            <person name="DeLeo F.R."/>
            <person name="Musser J.M."/>
        </authorList>
    </citation>
    <scope>NUCLEOTIDE SEQUENCE [LARGE SCALE GENOMIC DNA]</scope>
    <source>
        <strain>MGAS9429</strain>
    </source>
</reference>
<accession>Q1JKP9</accession>
<evidence type="ECO:0000255" key="1">
    <source>
        <dbReference type="HAMAP-Rule" id="MF_00182"/>
    </source>
</evidence>
<sequence length="311" mass="33675">MIKLLFMGTPQFSATVLKGLLDNPAYEILGVVTQPDRAVGRKKDIKVTPVKQLALEHGISIYQPEKLSGSQELIEIMGLGADGIITAAFGQFLPTLLLDSVSFAINVHASLLPKYRGGAPIHYAIMNGDKEAGVTIMEMIKEMDAGDMVAKASTPILETDNVGTLFEKLAIIGRDLLLDSLPAYLSGELKPIPQDHSQATFSPNISPEQEKLDWTMSNQEVFNHIRGMNPWPVAHTFLEGQRLKIYEAQLAEGEGLPGQVIVKTKKSLVIATGQGALSLIVVQPAGKPKMSIIDFLNGIGRKLEVGDIIGR</sequence>
<proteinExistence type="inferred from homology"/>
<dbReference type="EC" id="2.1.2.9" evidence="1"/>
<dbReference type="EMBL" id="CP000259">
    <property type="protein sequence ID" value="ABF32520.1"/>
    <property type="molecule type" value="Genomic_DNA"/>
</dbReference>
<dbReference type="RefSeq" id="WP_002988958.1">
    <property type="nucleotide sequence ID" value="NC_008021.1"/>
</dbReference>
<dbReference type="SMR" id="Q1JKP9"/>
<dbReference type="KEGG" id="spk:MGAS9429_Spy1333"/>
<dbReference type="HOGENOM" id="CLU_033347_1_1_9"/>
<dbReference type="Proteomes" id="UP000002433">
    <property type="component" value="Chromosome"/>
</dbReference>
<dbReference type="GO" id="GO:0005829">
    <property type="term" value="C:cytosol"/>
    <property type="evidence" value="ECO:0007669"/>
    <property type="project" value="TreeGrafter"/>
</dbReference>
<dbReference type="GO" id="GO:0004479">
    <property type="term" value="F:methionyl-tRNA formyltransferase activity"/>
    <property type="evidence" value="ECO:0007669"/>
    <property type="project" value="UniProtKB-UniRule"/>
</dbReference>
<dbReference type="CDD" id="cd08646">
    <property type="entry name" value="FMT_core_Met-tRNA-FMT_N"/>
    <property type="match status" value="1"/>
</dbReference>
<dbReference type="CDD" id="cd08704">
    <property type="entry name" value="Met_tRNA_FMT_C"/>
    <property type="match status" value="1"/>
</dbReference>
<dbReference type="FunFam" id="3.40.50.170:FF:000004">
    <property type="entry name" value="Methionyl-tRNA formyltransferase"/>
    <property type="match status" value="1"/>
</dbReference>
<dbReference type="Gene3D" id="3.10.25.10">
    <property type="entry name" value="Formyl transferase, C-terminal domain"/>
    <property type="match status" value="1"/>
</dbReference>
<dbReference type="Gene3D" id="3.40.50.170">
    <property type="entry name" value="Formyl transferase, N-terminal domain"/>
    <property type="match status" value="1"/>
</dbReference>
<dbReference type="HAMAP" id="MF_00182">
    <property type="entry name" value="Formyl_trans"/>
    <property type="match status" value="1"/>
</dbReference>
<dbReference type="InterPro" id="IPR005794">
    <property type="entry name" value="Fmt"/>
</dbReference>
<dbReference type="InterPro" id="IPR005793">
    <property type="entry name" value="Formyl_trans_C"/>
</dbReference>
<dbReference type="InterPro" id="IPR037022">
    <property type="entry name" value="Formyl_trans_C_sf"/>
</dbReference>
<dbReference type="InterPro" id="IPR002376">
    <property type="entry name" value="Formyl_transf_N"/>
</dbReference>
<dbReference type="InterPro" id="IPR036477">
    <property type="entry name" value="Formyl_transf_N_sf"/>
</dbReference>
<dbReference type="InterPro" id="IPR011034">
    <property type="entry name" value="Formyl_transferase-like_C_sf"/>
</dbReference>
<dbReference type="InterPro" id="IPR001555">
    <property type="entry name" value="GART_AS"/>
</dbReference>
<dbReference type="InterPro" id="IPR044135">
    <property type="entry name" value="Met-tRNA-FMT_C"/>
</dbReference>
<dbReference type="InterPro" id="IPR041711">
    <property type="entry name" value="Met-tRNA-FMT_N"/>
</dbReference>
<dbReference type="NCBIfam" id="TIGR00460">
    <property type="entry name" value="fmt"/>
    <property type="match status" value="1"/>
</dbReference>
<dbReference type="PANTHER" id="PTHR11138">
    <property type="entry name" value="METHIONYL-TRNA FORMYLTRANSFERASE"/>
    <property type="match status" value="1"/>
</dbReference>
<dbReference type="PANTHER" id="PTHR11138:SF5">
    <property type="entry name" value="METHIONYL-TRNA FORMYLTRANSFERASE, MITOCHONDRIAL"/>
    <property type="match status" value="1"/>
</dbReference>
<dbReference type="Pfam" id="PF02911">
    <property type="entry name" value="Formyl_trans_C"/>
    <property type="match status" value="1"/>
</dbReference>
<dbReference type="Pfam" id="PF00551">
    <property type="entry name" value="Formyl_trans_N"/>
    <property type="match status" value="1"/>
</dbReference>
<dbReference type="SUPFAM" id="SSF50486">
    <property type="entry name" value="FMT C-terminal domain-like"/>
    <property type="match status" value="1"/>
</dbReference>
<dbReference type="SUPFAM" id="SSF53328">
    <property type="entry name" value="Formyltransferase"/>
    <property type="match status" value="1"/>
</dbReference>
<dbReference type="PROSITE" id="PS00373">
    <property type="entry name" value="GART"/>
    <property type="match status" value="1"/>
</dbReference>
<keyword id="KW-0648">Protein biosynthesis</keyword>
<keyword id="KW-0808">Transferase</keyword>